<protein>
    <recommendedName>
        <fullName evidence="1">Peptidyl-tRNA hydrolase</fullName>
        <shortName evidence="1">Pth</shortName>
        <ecNumber evidence="1">3.1.1.29</ecNumber>
    </recommendedName>
</protein>
<accession>Q98HV6</accession>
<evidence type="ECO:0000255" key="1">
    <source>
        <dbReference type="HAMAP-Rule" id="MF_00083"/>
    </source>
</evidence>
<evidence type="ECO:0000256" key="2">
    <source>
        <dbReference type="SAM" id="MobiDB-lite"/>
    </source>
</evidence>
<comment type="function">
    <text evidence="1">Hydrolyzes ribosome-free peptidyl-tRNAs (with 1 or more amino acids incorporated), which drop off the ribosome during protein synthesis, or as a result of ribosome stalling.</text>
</comment>
<comment type="function">
    <text evidence="1">Catalyzes the release of premature peptidyl moieties from peptidyl-tRNA molecules trapped in stalled 50S ribosomal subunits, and thus maintains levels of free tRNAs and 50S ribosomes.</text>
</comment>
<comment type="catalytic activity">
    <reaction evidence="1">
        <text>an N-acyl-L-alpha-aminoacyl-tRNA + H2O = an N-acyl-L-amino acid + a tRNA + H(+)</text>
        <dbReference type="Rhea" id="RHEA:54448"/>
        <dbReference type="Rhea" id="RHEA-COMP:10123"/>
        <dbReference type="Rhea" id="RHEA-COMP:13883"/>
        <dbReference type="ChEBI" id="CHEBI:15377"/>
        <dbReference type="ChEBI" id="CHEBI:15378"/>
        <dbReference type="ChEBI" id="CHEBI:59874"/>
        <dbReference type="ChEBI" id="CHEBI:78442"/>
        <dbReference type="ChEBI" id="CHEBI:138191"/>
        <dbReference type="EC" id="3.1.1.29"/>
    </reaction>
</comment>
<comment type="subunit">
    <text evidence="1">Monomer.</text>
</comment>
<comment type="subcellular location">
    <subcellularLocation>
        <location evidence="1">Cytoplasm</location>
    </subcellularLocation>
</comment>
<comment type="similarity">
    <text evidence="1">Belongs to the PTH family.</text>
</comment>
<reference key="1">
    <citation type="journal article" date="2000" name="DNA Res.">
        <title>Complete genome structure of the nitrogen-fixing symbiotic bacterium Mesorhizobium loti.</title>
        <authorList>
            <person name="Kaneko T."/>
            <person name="Nakamura Y."/>
            <person name="Sato S."/>
            <person name="Asamizu E."/>
            <person name="Kato T."/>
            <person name="Sasamoto S."/>
            <person name="Watanabe A."/>
            <person name="Idesawa K."/>
            <person name="Ishikawa A."/>
            <person name="Kawashima K."/>
            <person name="Kimura T."/>
            <person name="Kishida Y."/>
            <person name="Kiyokawa C."/>
            <person name="Kohara M."/>
            <person name="Matsumoto M."/>
            <person name="Matsuno A."/>
            <person name="Mochizuki Y."/>
            <person name="Nakayama S."/>
            <person name="Nakazaki N."/>
            <person name="Shimpo S."/>
            <person name="Sugimoto M."/>
            <person name="Takeuchi C."/>
            <person name="Yamada M."/>
            <person name="Tabata S."/>
        </authorList>
    </citation>
    <scope>NUCLEOTIDE SEQUENCE [LARGE SCALE GENOMIC DNA]</scope>
    <source>
        <strain>LMG 29417 / CECT 9101 / MAFF 303099</strain>
    </source>
</reference>
<proteinExistence type="inferred from homology"/>
<sequence>MLVFAGLGNPGAKYADNRHNVGFMAADAIARRHSFSPWSKKFQGLIAEGTIAGEKIILIKPQTFMNLSGQSVGEALRFYKLELSALTVFYDEIDLAEGKLRIKTGGGAGGHNGIRSIDGHIGNAYRRVRIGVGHPGIKEMVQHHVLGDFAKADREWLDPLLDAIADNAAMIVKGDESGFMNKAALAVQGKAIAELEKPAQKQQPKQQSHIRQARSQQAPAKLPETGPMAAMLKKLFGNKD</sequence>
<organism>
    <name type="scientific">Mesorhizobium japonicum (strain LMG 29417 / CECT 9101 / MAFF 303099)</name>
    <name type="common">Mesorhizobium loti (strain MAFF 303099)</name>
    <dbReference type="NCBI Taxonomy" id="266835"/>
    <lineage>
        <taxon>Bacteria</taxon>
        <taxon>Pseudomonadati</taxon>
        <taxon>Pseudomonadota</taxon>
        <taxon>Alphaproteobacteria</taxon>
        <taxon>Hyphomicrobiales</taxon>
        <taxon>Phyllobacteriaceae</taxon>
        <taxon>Mesorhizobium</taxon>
    </lineage>
</organism>
<keyword id="KW-0963">Cytoplasm</keyword>
<keyword id="KW-0378">Hydrolase</keyword>
<keyword id="KW-0694">RNA-binding</keyword>
<keyword id="KW-0820">tRNA-binding</keyword>
<feature type="chain" id="PRO_0000187800" description="Peptidyl-tRNA hydrolase">
    <location>
        <begin position="1"/>
        <end position="240"/>
    </location>
</feature>
<feature type="region of interest" description="Disordered" evidence="2">
    <location>
        <begin position="196"/>
        <end position="227"/>
    </location>
</feature>
<feature type="compositionally biased region" description="Polar residues" evidence="2">
    <location>
        <begin position="209"/>
        <end position="218"/>
    </location>
</feature>
<feature type="active site" description="Proton acceptor" evidence="1">
    <location>
        <position position="19"/>
    </location>
</feature>
<feature type="binding site" evidence="1">
    <location>
        <position position="14"/>
    </location>
    <ligand>
        <name>tRNA</name>
        <dbReference type="ChEBI" id="CHEBI:17843"/>
    </ligand>
</feature>
<feature type="binding site" evidence="1">
    <location>
        <position position="64"/>
    </location>
    <ligand>
        <name>tRNA</name>
        <dbReference type="ChEBI" id="CHEBI:17843"/>
    </ligand>
</feature>
<feature type="binding site" evidence="1">
    <location>
        <position position="66"/>
    </location>
    <ligand>
        <name>tRNA</name>
        <dbReference type="ChEBI" id="CHEBI:17843"/>
    </ligand>
</feature>
<feature type="binding site" evidence="1">
    <location>
        <position position="112"/>
    </location>
    <ligand>
        <name>tRNA</name>
        <dbReference type="ChEBI" id="CHEBI:17843"/>
    </ligand>
</feature>
<feature type="site" description="Discriminates between blocked and unblocked aminoacyl-tRNA" evidence="1">
    <location>
        <position position="9"/>
    </location>
</feature>
<feature type="site" description="Stabilizes the basic form of H active site to accept a proton" evidence="1">
    <location>
        <position position="91"/>
    </location>
</feature>
<dbReference type="EC" id="3.1.1.29" evidence="1"/>
<dbReference type="EMBL" id="BA000012">
    <property type="protein sequence ID" value="BAB49760.1"/>
    <property type="molecule type" value="Genomic_DNA"/>
</dbReference>
<dbReference type="RefSeq" id="WP_010911109.1">
    <property type="nucleotide sequence ID" value="NC_002678.2"/>
</dbReference>
<dbReference type="SMR" id="Q98HV6"/>
<dbReference type="GeneID" id="66682482"/>
<dbReference type="KEGG" id="mlo:mlr2694"/>
<dbReference type="eggNOG" id="COG0193">
    <property type="taxonomic scope" value="Bacteria"/>
</dbReference>
<dbReference type="HOGENOM" id="CLU_062456_1_1_5"/>
<dbReference type="Proteomes" id="UP000000552">
    <property type="component" value="Chromosome"/>
</dbReference>
<dbReference type="GO" id="GO:0005737">
    <property type="term" value="C:cytoplasm"/>
    <property type="evidence" value="ECO:0007669"/>
    <property type="project" value="UniProtKB-SubCell"/>
</dbReference>
<dbReference type="GO" id="GO:0004045">
    <property type="term" value="F:peptidyl-tRNA hydrolase activity"/>
    <property type="evidence" value="ECO:0007669"/>
    <property type="project" value="UniProtKB-UniRule"/>
</dbReference>
<dbReference type="GO" id="GO:0000049">
    <property type="term" value="F:tRNA binding"/>
    <property type="evidence" value="ECO:0007669"/>
    <property type="project" value="UniProtKB-UniRule"/>
</dbReference>
<dbReference type="GO" id="GO:0006515">
    <property type="term" value="P:protein quality control for misfolded or incompletely synthesized proteins"/>
    <property type="evidence" value="ECO:0007669"/>
    <property type="project" value="UniProtKB-UniRule"/>
</dbReference>
<dbReference type="GO" id="GO:0072344">
    <property type="term" value="P:rescue of stalled ribosome"/>
    <property type="evidence" value="ECO:0007669"/>
    <property type="project" value="UniProtKB-UniRule"/>
</dbReference>
<dbReference type="CDD" id="cd00462">
    <property type="entry name" value="PTH"/>
    <property type="match status" value="1"/>
</dbReference>
<dbReference type="FunFam" id="3.40.50.1470:FF:000001">
    <property type="entry name" value="Peptidyl-tRNA hydrolase"/>
    <property type="match status" value="1"/>
</dbReference>
<dbReference type="Gene3D" id="3.40.50.1470">
    <property type="entry name" value="Peptidyl-tRNA hydrolase"/>
    <property type="match status" value="1"/>
</dbReference>
<dbReference type="HAMAP" id="MF_00083">
    <property type="entry name" value="Pept_tRNA_hydro_bact"/>
    <property type="match status" value="1"/>
</dbReference>
<dbReference type="InterPro" id="IPR001328">
    <property type="entry name" value="Pept_tRNA_hydro"/>
</dbReference>
<dbReference type="InterPro" id="IPR018171">
    <property type="entry name" value="Pept_tRNA_hydro_CS"/>
</dbReference>
<dbReference type="InterPro" id="IPR036416">
    <property type="entry name" value="Pept_tRNA_hydro_sf"/>
</dbReference>
<dbReference type="NCBIfam" id="TIGR00447">
    <property type="entry name" value="pth"/>
    <property type="match status" value="1"/>
</dbReference>
<dbReference type="PANTHER" id="PTHR17224">
    <property type="entry name" value="PEPTIDYL-TRNA HYDROLASE"/>
    <property type="match status" value="1"/>
</dbReference>
<dbReference type="PANTHER" id="PTHR17224:SF1">
    <property type="entry name" value="PEPTIDYL-TRNA HYDROLASE"/>
    <property type="match status" value="1"/>
</dbReference>
<dbReference type="Pfam" id="PF01195">
    <property type="entry name" value="Pept_tRNA_hydro"/>
    <property type="match status" value="1"/>
</dbReference>
<dbReference type="SUPFAM" id="SSF53178">
    <property type="entry name" value="Peptidyl-tRNA hydrolase-like"/>
    <property type="match status" value="1"/>
</dbReference>
<dbReference type="PROSITE" id="PS01195">
    <property type="entry name" value="PEPT_TRNA_HYDROL_1"/>
    <property type="match status" value="1"/>
</dbReference>
<dbReference type="PROSITE" id="PS01196">
    <property type="entry name" value="PEPT_TRNA_HYDROL_2"/>
    <property type="match status" value="1"/>
</dbReference>
<gene>
    <name evidence="1" type="primary">pth</name>
    <name type="ordered locus">mlr2694</name>
</gene>
<name>PTH_RHILO</name>